<protein>
    <recommendedName>
        <fullName evidence="1">Arginine--tRNA ligase</fullName>
        <ecNumber evidence="1">6.1.1.19</ecNumber>
    </recommendedName>
    <alternativeName>
        <fullName evidence="1">Arginyl-tRNA synthetase</fullName>
        <shortName evidence="1">ArgRS</shortName>
    </alternativeName>
</protein>
<sequence length="590" mass="64111">MNIFAAFEERIGEALASLTRAGQLPEGLDLGRVVVEPPRDPSHGDLATNAALVLAKEARTNPKALAERLAAELRSDPRVTEASVAGPGFLNLRLAPQVYGDVVRAALRAGEAFGRGAKQPGLVNVEYVSANPTGPMHVGHGRGAVFGDALANLLVAAGREVVREYYINDAGAQVDVLARSAFLRYREALGEEIGTIPEGLYPGDYLKPVGAMLAKTHGRSLLGKPEAEWLPLVREAAIGAMMERIREDLAALGIRHDVFFSERTLQEGGKEGGEGGAVARLIEALRARDLVYVGRLPPPKGQLPEDWEDRDQTLFRSTAFGDDIDRPLLKSDGSYTYFASDIAYHASKVERGATELIDVLGADHGGYVKRMQAAVRAVSDGRASLDVKLCQLVRLLRGGEPVKMSKRAGEFVTLREVIDEVGRDPVRFMMLYRKNDATLDFDLAKVVEQSKDNPVFYVQYAHARTASVFRQAREAFPGEDLSAEALAGADLSLLTDSGEAEIMRLIAQYPRVVESAGSAHEPHRLAFYLYELASAFHSFWNKGKDLPQLRFVNQTDRMSTLSRLALVAALRGVLASGLGILGVTAPDEMR</sequence>
<keyword id="KW-0030">Aminoacyl-tRNA synthetase</keyword>
<keyword id="KW-0067">ATP-binding</keyword>
<keyword id="KW-0963">Cytoplasm</keyword>
<keyword id="KW-0436">Ligase</keyword>
<keyword id="KW-0547">Nucleotide-binding</keyword>
<keyword id="KW-0648">Protein biosynthesis</keyword>
<keyword id="KW-1185">Reference proteome</keyword>
<dbReference type="EC" id="6.1.1.19" evidence="1"/>
<dbReference type="EMBL" id="CP001349">
    <property type="protein sequence ID" value="ACL57160.1"/>
    <property type="molecule type" value="Genomic_DNA"/>
</dbReference>
<dbReference type="RefSeq" id="WP_015928846.1">
    <property type="nucleotide sequence ID" value="NC_011894.1"/>
</dbReference>
<dbReference type="SMR" id="B8I9T2"/>
<dbReference type="STRING" id="460265.Mnod_2178"/>
<dbReference type="KEGG" id="mno:Mnod_2178"/>
<dbReference type="eggNOG" id="COG0018">
    <property type="taxonomic scope" value="Bacteria"/>
</dbReference>
<dbReference type="HOGENOM" id="CLU_006406_0_1_5"/>
<dbReference type="OrthoDB" id="9803211at2"/>
<dbReference type="Proteomes" id="UP000008207">
    <property type="component" value="Chromosome"/>
</dbReference>
<dbReference type="GO" id="GO:0005737">
    <property type="term" value="C:cytoplasm"/>
    <property type="evidence" value="ECO:0007669"/>
    <property type="project" value="UniProtKB-SubCell"/>
</dbReference>
<dbReference type="GO" id="GO:0004814">
    <property type="term" value="F:arginine-tRNA ligase activity"/>
    <property type="evidence" value="ECO:0007669"/>
    <property type="project" value="UniProtKB-UniRule"/>
</dbReference>
<dbReference type="GO" id="GO:0005524">
    <property type="term" value="F:ATP binding"/>
    <property type="evidence" value="ECO:0007669"/>
    <property type="project" value="UniProtKB-UniRule"/>
</dbReference>
<dbReference type="GO" id="GO:0006420">
    <property type="term" value="P:arginyl-tRNA aminoacylation"/>
    <property type="evidence" value="ECO:0007669"/>
    <property type="project" value="UniProtKB-UniRule"/>
</dbReference>
<dbReference type="CDD" id="cd00671">
    <property type="entry name" value="ArgRS_core"/>
    <property type="match status" value="1"/>
</dbReference>
<dbReference type="FunFam" id="1.10.730.10:FF:000008">
    <property type="entry name" value="Arginine--tRNA ligase"/>
    <property type="match status" value="1"/>
</dbReference>
<dbReference type="Gene3D" id="3.30.1360.70">
    <property type="entry name" value="Arginyl tRNA synthetase N-terminal domain"/>
    <property type="match status" value="1"/>
</dbReference>
<dbReference type="Gene3D" id="3.40.50.620">
    <property type="entry name" value="HUPs"/>
    <property type="match status" value="1"/>
</dbReference>
<dbReference type="Gene3D" id="1.10.730.10">
    <property type="entry name" value="Isoleucyl-tRNA Synthetase, Domain 1"/>
    <property type="match status" value="1"/>
</dbReference>
<dbReference type="HAMAP" id="MF_00123">
    <property type="entry name" value="Arg_tRNA_synth"/>
    <property type="match status" value="1"/>
</dbReference>
<dbReference type="InterPro" id="IPR001412">
    <property type="entry name" value="aa-tRNA-synth_I_CS"/>
</dbReference>
<dbReference type="InterPro" id="IPR001278">
    <property type="entry name" value="Arg-tRNA-ligase"/>
</dbReference>
<dbReference type="InterPro" id="IPR005148">
    <property type="entry name" value="Arg-tRNA-synth_N"/>
</dbReference>
<dbReference type="InterPro" id="IPR036695">
    <property type="entry name" value="Arg-tRNA-synth_N_sf"/>
</dbReference>
<dbReference type="InterPro" id="IPR035684">
    <property type="entry name" value="ArgRS_core"/>
</dbReference>
<dbReference type="InterPro" id="IPR008909">
    <property type="entry name" value="DALR_anticod-bd"/>
</dbReference>
<dbReference type="InterPro" id="IPR014729">
    <property type="entry name" value="Rossmann-like_a/b/a_fold"/>
</dbReference>
<dbReference type="InterPro" id="IPR009080">
    <property type="entry name" value="tRNAsynth_Ia_anticodon-bd"/>
</dbReference>
<dbReference type="NCBIfam" id="TIGR00456">
    <property type="entry name" value="argS"/>
    <property type="match status" value="1"/>
</dbReference>
<dbReference type="PANTHER" id="PTHR11956:SF5">
    <property type="entry name" value="ARGININE--TRNA LIGASE, CYTOPLASMIC"/>
    <property type="match status" value="1"/>
</dbReference>
<dbReference type="PANTHER" id="PTHR11956">
    <property type="entry name" value="ARGINYL-TRNA SYNTHETASE"/>
    <property type="match status" value="1"/>
</dbReference>
<dbReference type="Pfam" id="PF03485">
    <property type="entry name" value="Arg_tRNA_synt_N"/>
    <property type="match status" value="1"/>
</dbReference>
<dbReference type="Pfam" id="PF05746">
    <property type="entry name" value="DALR_1"/>
    <property type="match status" value="1"/>
</dbReference>
<dbReference type="Pfam" id="PF00750">
    <property type="entry name" value="tRNA-synt_1d"/>
    <property type="match status" value="2"/>
</dbReference>
<dbReference type="PRINTS" id="PR01038">
    <property type="entry name" value="TRNASYNTHARG"/>
</dbReference>
<dbReference type="SMART" id="SM01016">
    <property type="entry name" value="Arg_tRNA_synt_N"/>
    <property type="match status" value="1"/>
</dbReference>
<dbReference type="SMART" id="SM00836">
    <property type="entry name" value="DALR_1"/>
    <property type="match status" value="1"/>
</dbReference>
<dbReference type="SUPFAM" id="SSF47323">
    <property type="entry name" value="Anticodon-binding domain of a subclass of class I aminoacyl-tRNA synthetases"/>
    <property type="match status" value="1"/>
</dbReference>
<dbReference type="SUPFAM" id="SSF55190">
    <property type="entry name" value="Arginyl-tRNA synthetase (ArgRS), N-terminal 'additional' domain"/>
    <property type="match status" value="1"/>
</dbReference>
<dbReference type="SUPFAM" id="SSF52374">
    <property type="entry name" value="Nucleotidylyl transferase"/>
    <property type="match status" value="1"/>
</dbReference>
<dbReference type="PROSITE" id="PS00178">
    <property type="entry name" value="AA_TRNA_LIGASE_I"/>
    <property type="match status" value="1"/>
</dbReference>
<feature type="chain" id="PRO_1000198921" description="Arginine--tRNA ligase">
    <location>
        <begin position="1"/>
        <end position="590"/>
    </location>
</feature>
<feature type="short sequence motif" description="'HIGH' region">
    <location>
        <begin position="130"/>
        <end position="140"/>
    </location>
</feature>
<gene>
    <name evidence="1" type="primary">argS</name>
    <name type="ordered locus">Mnod_2178</name>
</gene>
<proteinExistence type="inferred from homology"/>
<accession>B8I9T2</accession>
<evidence type="ECO:0000255" key="1">
    <source>
        <dbReference type="HAMAP-Rule" id="MF_00123"/>
    </source>
</evidence>
<organism>
    <name type="scientific">Methylobacterium nodulans (strain LMG 21967 / CNCM I-2342 / ORS 2060)</name>
    <dbReference type="NCBI Taxonomy" id="460265"/>
    <lineage>
        <taxon>Bacteria</taxon>
        <taxon>Pseudomonadati</taxon>
        <taxon>Pseudomonadota</taxon>
        <taxon>Alphaproteobacteria</taxon>
        <taxon>Hyphomicrobiales</taxon>
        <taxon>Methylobacteriaceae</taxon>
        <taxon>Methylobacterium</taxon>
    </lineage>
</organism>
<reference key="1">
    <citation type="submission" date="2009-01" db="EMBL/GenBank/DDBJ databases">
        <title>Complete sequence of chromosome of Methylobacterium nodulans ORS 2060.</title>
        <authorList>
            <consortium name="US DOE Joint Genome Institute"/>
            <person name="Lucas S."/>
            <person name="Copeland A."/>
            <person name="Lapidus A."/>
            <person name="Glavina del Rio T."/>
            <person name="Dalin E."/>
            <person name="Tice H."/>
            <person name="Bruce D."/>
            <person name="Goodwin L."/>
            <person name="Pitluck S."/>
            <person name="Sims D."/>
            <person name="Brettin T."/>
            <person name="Detter J.C."/>
            <person name="Han C."/>
            <person name="Larimer F."/>
            <person name="Land M."/>
            <person name="Hauser L."/>
            <person name="Kyrpides N."/>
            <person name="Ivanova N."/>
            <person name="Marx C.J."/>
            <person name="Richardson P."/>
        </authorList>
    </citation>
    <scope>NUCLEOTIDE SEQUENCE [LARGE SCALE GENOMIC DNA]</scope>
    <source>
        <strain>LMG 21967 / CNCM I-2342 / ORS 2060</strain>
    </source>
</reference>
<name>SYR_METNO</name>
<comment type="catalytic activity">
    <reaction evidence="1">
        <text>tRNA(Arg) + L-arginine + ATP = L-arginyl-tRNA(Arg) + AMP + diphosphate</text>
        <dbReference type="Rhea" id="RHEA:20301"/>
        <dbReference type="Rhea" id="RHEA-COMP:9658"/>
        <dbReference type="Rhea" id="RHEA-COMP:9673"/>
        <dbReference type="ChEBI" id="CHEBI:30616"/>
        <dbReference type="ChEBI" id="CHEBI:32682"/>
        <dbReference type="ChEBI" id="CHEBI:33019"/>
        <dbReference type="ChEBI" id="CHEBI:78442"/>
        <dbReference type="ChEBI" id="CHEBI:78513"/>
        <dbReference type="ChEBI" id="CHEBI:456215"/>
        <dbReference type="EC" id="6.1.1.19"/>
    </reaction>
</comment>
<comment type="subunit">
    <text evidence="1">Monomer.</text>
</comment>
<comment type="subcellular location">
    <subcellularLocation>
        <location evidence="1">Cytoplasm</location>
    </subcellularLocation>
</comment>
<comment type="similarity">
    <text evidence="1">Belongs to the class-I aminoacyl-tRNA synthetase family.</text>
</comment>